<protein>
    <recommendedName>
        <fullName evidence="1">Na(+)-translocating NADH-quinone reductase subunit A</fullName>
        <shortName evidence="1">Na(+)-NQR subunit A</shortName>
        <shortName evidence="1">Na(+)-translocating NQR subunit A</shortName>
        <ecNumber evidence="1">7.2.1.1</ecNumber>
    </recommendedName>
    <alternativeName>
        <fullName evidence="1">NQR complex subunit A</fullName>
    </alternativeName>
    <alternativeName>
        <fullName evidence="1">NQR-1 subunit A</fullName>
    </alternativeName>
</protein>
<keyword id="KW-0406">Ion transport</keyword>
<keyword id="KW-0520">NAD</keyword>
<keyword id="KW-1185">Reference proteome</keyword>
<keyword id="KW-0915">Sodium</keyword>
<keyword id="KW-0739">Sodium transport</keyword>
<keyword id="KW-1278">Translocase</keyword>
<keyword id="KW-0813">Transport</keyword>
<keyword id="KW-0830">Ubiquinone</keyword>
<name>NQRA_ACTP2</name>
<feature type="chain" id="PRO_1000060109" description="Na(+)-translocating NADH-quinone reductase subunit A">
    <location>
        <begin position="1"/>
        <end position="449"/>
    </location>
</feature>
<evidence type="ECO:0000255" key="1">
    <source>
        <dbReference type="HAMAP-Rule" id="MF_00425"/>
    </source>
</evidence>
<dbReference type="EC" id="7.2.1.1" evidence="1"/>
<dbReference type="EMBL" id="CP000569">
    <property type="protein sequence ID" value="ABN73258.1"/>
    <property type="molecule type" value="Genomic_DNA"/>
</dbReference>
<dbReference type="RefSeq" id="WP_005595863.1">
    <property type="nucleotide sequence ID" value="NC_009053.1"/>
</dbReference>
<dbReference type="SMR" id="A3MYM2"/>
<dbReference type="STRING" id="416269.APL_0150"/>
<dbReference type="EnsemblBacteria" id="ABN73258">
    <property type="protein sequence ID" value="ABN73258"/>
    <property type="gene ID" value="APL_0150"/>
</dbReference>
<dbReference type="KEGG" id="apl:APL_0150"/>
<dbReference type="eggNOG" id="COG1726">
    <property type="taxonomic scope" value="Bacteria"/>
</dbReference>
<dbReference type="HOGENOM" id="CLU_046656_0_0_6"/>
<dbReference type="Proteomes" id="UP000001432">
    <property type="component" value="Chromosome"/>
</dbReference>
<dbReference type="GO" id="GO:0016655">
    <property type="term" value="F:oxidoreductase activity, acting on NAD(P)H, quinone or similar compound as acceptor"/>
    <property type="evidence" value="ECO:0007669"/>
    <property type="project" value="UniProtKB-UniRule"/>
</dbReference>
<dbReference type="GO" id="GO:0006814">
    <property type="term" value="P:sodium ion transport"/>
    <property type="evidence" value="ECO:0007669"/>
    <property type="project" value="UniProtKB-UniRule"/>
</dbReference>
<dbReference type="Gene3D" id="2.40.50.100">
    <property type="match status" value="1"/>
</dbReference>
<dbReference type="HAMAP" id="MF_00425">
    <property type="entry name" value="NqrA"/>
    <property type="match status" value="1"/>
</dbReference>
<dbReference type="InterPro" id="IPR008703">
    <property type="entry name" value="NqrA"/>
</dbReference>
<dbReference type="InterPro" id="IPR056148">
    <property type="entry name" value="NQRA_2nd"/>
</dbReference>
<dbReference type="InterPro" id="IPR022615">
    <property type="entry name" value="NqrA_C_domain"/>
</dbReference>
<dbReference type="InterPro" id="IPR056147">
    <property type="entry name" value="NQRA_N"/>
</dbReference>
<dbReference type="NCBIfam" id="TIGR01936">
    <property type="entry name" value="nqrA"/>
    <property type="match status" value="1"/>
</dbReference>
<dbReference type="NCBIfam" id="NF003759">
    <property type="entry name" value="PRK05352.1-2"/>
    <property type="match status" value="1"/>
</dbReference>
<dbReference type="PANTHER" id="PTHR37839">
    <property type="entry name" value="NA(+)-TRANSLOCATING NADH-QUINONE REDUCTASE SUBUNIT A"/>
    <property type="match status" value="1"/>
</dbReference>
<dbReference type="PANTHER" id="PTHR37839:SF1">
    <property type="entry name" value="NA(+)-TRANSLOCATING NADH-QUINONE REDUCTASE SUBUNIT A"/>
    <property type="match status" value="1"/>
</dbReference>
<dbReference type="Pfam" id="PF24836">
    <property type="entry name" value="NQRA_2nd"/>
    <property type="match status" value="1"/>
</dbReference>
<dbReference type="Pfam" id="PF05896">
    <property type="entry name" value="NQRA_N"/>
    <property type="match status" value="1"/>
</dbReference>
<dbReference type="Pfam" id="PF11973">
    <property type="entry name" value="NQRA_SLBB"/>
    <property type="match status" value="1"/>
</dbReference>
<comment type="function">
    <text evidence="1">NQR complex catalyzes the reduction of ubiquinone-1 to ubiquinol by two successive reactions, coupled with the transport of Na(+) ions from the cytoplasm to the periplasm. NqrA to NqrE are probably involved in the second step, the conversion of ubisemiquinone to ubiquinol.</text>
</comment>
<comment type="catalytic activity">
    <reaction evidence="1">
        <text>a ubiquinone + n Na(+)(in) + NADH + H(+) = a ubiquinol + n Na(+)(out) + NAD(+)</text>
        <dbReference type="Rhea" id="RHEA:47748"/>
        <dbReference type="Rhea" id="RHEA-COMP:9565"/>
        <dbReference type="Rhea" id="RHEA-COMP:9566"/>
        <dbReference type="ChEBI" id="CHEBI:15378"/>
        <dbReference type="ChEBI" id="CHEBI:16389"/>
        <dbReference type="ChEBI" id="CHEBI:17976"/>
        <dbReference type="ChEBI" id="CHEBI:29101"/>
        <dbReference type="ChEBI" id="CHEBI:57540"/>
        <dbReference type="ChEBI" id="CHEBI:57945"/>
        <dbReference type="EC" id="7.2.1.1"/>
    </reaction>
</comment>
<comment type="subunit">
    <text evidence="1">Composed of six subunits; NqrA, NqrB, NqrC, NqrD, NqrE and NqrF.</text>
</comment>
<comment type="similarity">
    <text evidence="1">Belongs to the NqrA family.</text>
</comment>
<proteinExistence type="inferred from homology"/>
<gene>
    <name evidence="1" type="primary">nqrA</name>
    <name type="ordered locus">APL_0150</name>
</gene>
<organism>
    <name type="scientific">Actinobacillus pleuropneumoniae serotype 5b (strain L20)</name>
    <dbReference type="NCBI Taxonomy" id="416269"/>
    <lineage>
        <taxon>Bacteria</taxon>
        <taxon>Pseudomonadati</taxon>
        <taxon>Pseudomonadota</taxon>
        <taxon>Gammaproteobacteria</taxon>
        <taxon>Pasteurellales</taxon>
        <taxon>Pasteurellaceae</taxon>
        <taxon>Actinobacillus</taxon>
    </lineage>
</organism>
<accession>A3MYM2</accession>
<sequence length="449" mass="48604">MITIKKGLDLPIAGTPAQVIHNGNTVNEVAMLGEEYVGMRPSMKVREGDVVKKGQVLFEDKKNPGVVFTAPASGTVVTINRGEKRVLQSVVIKVEGDEQITFTRYEAAQLASLSAEQVKQNLIESGLWTAFRTRPFSKVPALDAIPSSIFVNAMDTNPLAADPEVVLKEYETDFKDGLTVLTRLFNGQKPVYLCKDADSNIPLSPAIEGITIKSFSGVHPAGLVGTHIHFVDPVGATKQVWHLNYQDVIAIGKLFTTGELFTDRIISLAGPQVKNPRLVRTRLGANLSQLTANELNAGENRVISGSVLSGATAAGPVDYLGRYALQVSVLAEGREKELFGWIMPGSDKFSITRTVLGHFGKKLFNFTTAVHGGERAMVPIGAYERVMPLDIIPTLLLRDLAAGDTDSAQNLGCLELDEEDLALCTYVCPGKNNYGPMLRAALEKIEKEG</sequence>
<reference key="1">
    <citation type="journal article" date="2008" name="J. Bacteriol.">
        <title>The complete genome sequence of Actinobacillus pleuropneumoniae L20 (serotype 5b).</title>
        <authorList>
            <person name="Foote S.J."/>
            <person name="Bosse J.T."/>
            <person name="Bouevitch A.B."/>
            <person name="Langford P.R."/>
            <person name="Young N.M."/>
            <person name="Nash J.H.E."/>
        </authorList>
    </citation>
    <scope>NUCLEOTIDE SEQUENCE [LARGE SCALE GENOMIC DNA]</scope>
    <source>
        <strain>L20</strain>
    </source>
</reference>